<gene>
    <name type="primary">SAR1</name>
</gene>
<proteinExistence type="inferred from homology"/>
<keyword id="KW-0963">Cytoplasm</keyword>
<keyword id="KW-0256">Endoplasmic reticulum</keyword>
<keyword id="KW-0931">ER-Golgi transport</keyword>
<keyword id="KW-0333">Golgi apparatus</keyword>
<keyword id="KW-0342">GTP-binding</keyword>
<keyword id="KW-0378">Hydrolase</keyword>
<keyword id="KW-0460">Magnesium</keyword>
<keyword id="KW-0472">Membrane</keyword>
<keyword id="KW-0479">Metal-binding</keyword>
<keyword id="KW-0547">Nucleotide-binding</keyword>
<keyword id="KW-0653">Protein transport</keyword>
<keyword id="KW-0813">Transport</keyword>
<evidence type="ECO:0000250" key="1">
    <source>
        <dbReference type="UniProtKB" id="Q9NR31"/>
    </source>
</evidence>
<evidence type="ECO:0000250" key="2">
    <source>
        <dbReference type="UniProtKB" id="Q9QVY3"/>
    </source>
</evidence>
<evidence type="ECO:0000250" key="3">
    <source>
        <dbReference type="UniProtKB" id="Q9Y6B6"/>
    </source>
</evidence>
<evidence type="ECO:0000305" key="4"/>
<sequence>MGFGDWFKSALSFLGLYKKKATIVFVGLDNAGKSTLLAMLKNSATTTVAPTQQPTSQELVMGSIRFKTFDLGGHEVARQLWEQYVTNSDGIVFLVDSADPSRFEESRRTLQELLDNHDLATTPILILSNKVDIQTAVSMETMVQSFGIQHLLTGKGGSNLRSDQRPLEVFPCSVINRFGYTDGFKWLSKYL</sequence>
<comment type="function">
    <text evidence="1">Small GTPase that cycles between an active GTP-bound and an inactive GDP-bound state and mainly functions in vesicle-mediated endoplasmic reticulum (ER) to Golgi transport. The active GTP-bound form inserts into the endoplasmic reticulum membrane where it recruits the remainder of the coat protein complex II/COPII. The coat protein complex II assembling and polymerizing on endoplasmic reticulum membrane is responsible for both the sorting of cargos and the deformation and budding of membranes into vesicles destined to the Golgi.</text>
</comment>
<comment type="catalytic activity">
    <reaction evidence="1">
        <text>GTP + H2O = GDP + phosphate + H(+)</text>
        <dbReference type="Rhea" id="RHEA:19669"/>
        <dbReference type="ChEBI" id="CHEBI:15377"/>
        <dbReference type="ChEBI" id="CHEBI:15378"/>
        <dbReference type="ChEBI" id="CHEBI:37565"/>
        <dbReference type="ChEBI" id="CHEBI:43474"/>
        <dbReference type="ChEBI" id="CHEBI:58189"/>
        <dbReference type="EC" id="3.6.5.2"/>
    </reaction>
    <physiologicalReaction direction="left-to-right" evidence="1">
        <dbReference type="Rhea" id="RHEA:19670"/>
    </physiologicalReaction>
</comment>
<comment type="activity regulation">
    <text evidence="1">Small GTPases activation is mediated by guanine exchange factors (GEF), while inactivation through hydrolysis of the bound GTP is stimulated by GTPase activating proteins (GAP).</text>
</comment>
<comment type="subunit">
    <text evidence="1">Homodimer; upon association with membrane. Part of the coat protein complex II/COPII, composed of SEC23/24 and SEC13/31 heterodimers, that it helps recruit and assemble on endoplasmic reticulum (ER) membranes at ER exit sites.</text>
</comment>
<comment type="subcellular location">
    <subcellularLocation>
        <location evidence="1">Endoplasmic reticulum membrane</location>
        <topology evidence="1">Peripheral membrane protein</topology>
    </subcellularLocation>
    <subcellularLocation>
        <location evidence="1">Golgi apparatus</location>
        <location evidence="1">Golgi stack membrane</location>
        <topology evidence="1">Peripheral membrane protein</topology>
    </subcellularLocation>
    <subcellularLocation>
        <location evidence="1">Cytoplasm</location>
        <location evidence="1">Cytosol</location>
    </subcellularLocation>
    <text evidence="1">Active at endoplasmic reticulum exit sites (ERES) where it inserts into the membrane and recruits the remainder of the coat protein complex II/COPII.</text>
</comment>
<comment type="similarity">
    <text evidence="4">Belongs to the small GTPase superfamily. SAR1 family.</text>
</comment>
<feature type="chain" id="PRO_0000206264" description="Small COPII coat GTPase SAR1">
    <location>
        <begin position="1"/>
        <end position="191"/>
    </location>
</feature>
<feature type="region of interest" description="Mediates recruitment to ER membranes" evidence="2">
    <location>
        <begin position="10"/>
        <end position="14"/>
    </location>
</feature>
<feature type="binding site" evidence="1">
    <location>
        <position position="29"/>
    </location>
    <ligand>
        <name>Mg(2+)</name>
        <dbReference type="ChEBI" id="CHEBI:18420"/>
    </ligand>
</feature>
<feature type="binding site" evidence="1">
    <location>
        <position position="30"/>
    </location>
    <ligand>
        <name>GDP</name>
        <dbReference type="ChEBI" id="CHEBI:58189"/>
    </ligand>
</feature>
<feature type="binding site" evidence="3">
    <location>
        <position position="30"/>
    </location>
    <ligand>
        <name>GTP</name>
        <dbReference type="ChEBI" id="CHEBI:37565"/>
    </ligand>
</feature>
<feature type="binding site" evidence="1">
    <location>
        <position position="31"/>
    </location>
    <ligand>
        <name>GDP</name>
        <dbReference type="ChEBI" id="CHEBI:58189"/>
    </ligand>
</feature>
<feature type="binding site" evidence="1">
    <location>
        <position position="32"/>
    </location>
    <ligand>
        <name>GDP</name>
        <dbReference type="ChEBI" id="CHEBI:58189"/>
    </ligand>
</feature>
<feature type="binding site" evidence="3">
    <location>
        <position position="32"/>
    </location>
    <ligand>
        <name>GTP</name>
        <dbReference type="ChEBI" id="CHEBI:37565"/>
    </ligand>
</feature>
<feature type="binding site" evidence="1">
    <location>
        <position position="33"/>
    </location>
    <ligand>
        <name>GDP</name>
        <dbReference type="ChEBI" id="CHEBI:58189"/>
    </ligand>
</feature>
<feature type="binding site" evidence="3">
    <location>
        <position position="33"/>
    </location>
    <ligand>
        <name>GTP</name>
        <dbReference type="ChEBI" id="CHEBI:37565"/>
    </ligand>
</feature>
<feature type="binding site" evidence="1">
    <location>
        <position position="34"/>
    </location>
    <ligand>
        <name>GDP</name>
        <dbReference type="ChEBI" id="CHEBI:58189"/>
    </ligand>
</feature>
<feature type="binding site" evidence="3">
    <location>
        <position position="34"/>
    </location>
    <ligand>
        <name>GTP</name>
        <dbReference type="ChEBI" id="CHEBI:37565"/>
    </ligand>
</feature>
<feature type="binding site" evidence="1">
    <location>
        <position position="35"/>
    </location>
    <ligand>
        <name>GDP</name>
        <dbReference type="ChEBI" id="CHEBI:58189"/>
    </ligand>
</feature>
<feature type="binding site" evidence="3">
    <location>
        <position position="35"/>
    </location>
    <ligand>
        <name>GTP</name>
        <dbReference type="ChEBI" id="CHEBI:37565"/>
    </ligand>
</feature>
<feature type="binding site" evidence="1">
    <location>
        <position position="70"/>
    </location>
    <ligand>
        <name>Mg(2+)</name>
        <dbReference type="ChEBI" id="CHEBI:18420"/>
    </ligand>
</feature>
<feature type="binding site" evidence="1">
    <location>
        <position position="129"/>
    </location>
    <ligand>
        <name>GDP</name>
        <dbReference type="ChEBI" id="CHEBI:58189"/>
    </ligand>
</feature>
<feature type="binding site" evidence="3">
    <location>
        <position position="129"/>
    </location>
    <ligand>
        <name>GTP</name>
        <dbReference type="ChEBI" id="CHEBI:37565"/>
    </ligand>
</feature>
<feature type="binding site" evidence="1">
    <location>
        <position position="130"/>
    </location>
    <ligand>
        <name>GDP</name>
        <dbReference type="ChEBI" id="CHEBI:58189"/>
    </ligand>
</feature>
<feature type="binding site" evidence="3">
    <location>
        <position position="130"/>
    </location>
    <ligand>
        <name>GTP</name>
        <dbReference type="ChEBI" id="CHEBI:37565"/>
    </ligand>
</feature>
<feature type="binding site" evidence="1">
    <location>
        <position position="132"/>
    </location>
    <ligand>
        <name>GDP</name>
        <dbReference type="ChEBI" id="CHEBI:58189"/>
    </ligand>
</feature>
<feature type="binding site" evidence="3">
    <location>
        <position position="132"/>
    </location>
    <ligand>
        <name>GTP</name>
        <dbReference type="ChEBI" id="CHEBI:37565"/>
    </ligand>
</feature>
<feature type="binding site" evidence="1">
    <location>
        <position position="174"/>
    </location>
    <ligand>
        <name>GDP</name>
        <dbReference type="ChEBI" id="CHEBI:58189"/>
    </ligand>
</feature>
<feature type="binding site" evidence="3">
    <location>
        <position position="174"/>
    </location>
    <ligand>
        <name>GTP</name>
        <dbReference type="ChEBI" id="CHEBI:37565"/>
    </ligand>
</feature>
<feature type="binding site" evidence="1">
    <location>
        <position position="175"/>
    </location>
    <ligand>
        <name>GDP</name>
        <dbReference type="ChEBI" id="CHEBI:58189"/>
    </ligand>
</feature>
<feature type="binding site" evidence="3">
    <location>
        <position position="175"/>
    </location>
    <ligand>
        <name>GTP</name>
        <dbReference type="ChEBI" id="CHEBI:37565"/>
    </ligand>
</feature>
<protein>
    <recommendedName>
        <fullName evidence="1">Small COPII coat GTPase SAR1</fullName>
        <ecNumber evidence="1">3.6.5.2</ecNumber>
    </recommendedName>
</protein>
<accession>Q8MQT8</accession>
<dbReference type="EC" id="3.6.5.2" evidence="1"/>
<dbReference type="EMBL" id="AY125726">
    <property type="protein sequence ID" value="AAM83404.1"/>
    <property type="molecule type" value="Genomic_DNA"/>
</dbReference>
<dbReference type="SMR" id="Q8MQT8"/>
<dbReference type="VEuPathDB" id="GiardiaDB:DHA2_7569"/>
<dbReference type="VEuPathDB" id="GiardiaDB:GL50581_2996"/>
<dbReference type="VEuPathDB" id="GiardiaDB:GL50803_007569"/>
<dbReference type="VEuPathDB" id="GiardiaDB:QR46_2285"/>
<dbReference type="eggNOG" id="KOG0077">
    <property type="taxonomic scope" value="Eukaryota"/>
</dbReference>
<dbReference type="GO" id="GO:0005829">
    <property type="term" value="C:cytosol"/>
    <property type="evidence" value="ECO:0007669"/>
    <property type="project" value="UniProtKB-SubCell"/>
</dbReference>
<dbReference type="GO" id="GO:0005789">
    <property type="term" value="C:endoplasmic reticulum membrane"/>
    <property type="evidence" value="ECO:0007669"/>
    <property type="project" value="UniProtKB-SubCell"/>
</dbReference>
<dbReference type="GO" id="GO:0032580">
    <property type="term" value="C:Golgi cisterna membrane"/>
    <property type="evidence" value="ECO:0007669"/>
    <property type="project" value="UniProtKB-SubCell"/>
</dbReference>
<dbReference type="GO" id="GO:0005525">
    <property type="term" value="F:GTP binding"/>
    <property type="evidence" value="ECO:0007669"/>
    <property type="project" value="UniProtKB-KW"/>
</dbReference>
<dbReference type="GO" id="GO:0003924">
    <property type="term" value="F:GTPase activity"/>
    <property type="evidence" value="ECO:0007669"/>
    <property type="project" value="InterPro"/>
</dbReference>
<dbReference type="GO" id="GO:0046872">
    <property type="term" value="F:metal ion binding"/>
    <property type="evidence" value="ECO:0007669"/>
    <property type="project" value="UniProtKB-KW"/>
</dbReference>
<dbReference type="GO" id="GO:0006886">
    <property type="term" value="P:intracellular protein transport"/>
    <property type="evidence" value="ECO:0007669"/>
    <property type="project" value="InterPro"/>
</dbReference>
<dbReference type="GO" id="GO:0016192">
    <property type="term" value="P:vesicle-mediated transport"/>
    <property type="evidence" value="ECO:0007669"/>
    <property type="project" value="UniProtKB-KW"/>
</dbReference>
<dbReference type="CDD" id="cd00879">
    <property type="entry name" value="Sar1"/>
    <property type="match status" value="1"/>
</dbReference>
<dbReference type="FunFam" id="3.40.50.300:FF:000161">
    <property type="entry name" value="Small COPII coat GTPase"/>
    <property type="match status" value="1"/>
</dbReference>
<dbReference type="Gene3D" id="3.40.50.300">
    <property type="entry name" value="P-loop containing nucleotide triphosphate hydrolases"/>
    <property type="match status" value="1"/>
</dbReference>
<dbReference type="InterPro" id="IPR027417">
    <property type="entry name" value="P-loop_NTPase"/>
</dbReference>
<dbReference type="InterPro" id="IPR005225">
    <property type="entry name" value="Small_GTP-bd"/>
</dbReference>
<dbReference type="InterPro" id="IPR006689">
    <property type="entry name" value="Small_GTPase_ARF/SAR"/>
</dbReference>
<dbReference type="InterPro" id="IPR006687">
    <property type="entry name" value="Small_GTPase_SAR1"/>
</dbReference>
<dbReference type="NCBIfam" id="TIGR00231">
    <property type="entry name" value="small_GTP"/>
    <property type="match status" value="1"/>
</dbReference>
<dbReference type="PANTHER" id="PTHR45684">
    <property type="entry name" value="RE74312P"/>
    <property type="match status" value="1"/>
</dbReference>
<dbReference type="Pfam" id="PF00025">
    <property type="entry name" value="Arf"/>
    <property type="match status" value="1"/>
</dbReference>
<dbReference type="PRINTS" id="PR00328">
    <property type="entry name" value="SAR1GTPBP"/>
</dbReference>
<dbReference type="SMART" id="SM00177">
    <property type="entry name" value="ARF"/>
    <property type="match status" value="1"/>
</dbReference>
<dbReference type="SMART" id="SM00178">
    <property type="entry name" value="SAR"/>
    <property type="match status" value="1"/>
</dbReference>
<dbReference type="SUPFAM" id="SSF52540">
    <property type="entry name" value="P-loop containing nucleoside triphosphate hydrolases"/>
    <property type="match status" value="1"/>
</dbReference>
<dbReference type="PROSITE" id="PS51422">
    <property type="entry name" value="SAR1"/>
    <property type="match status" value="1"/>
</dbReference>
<organism>
    <name type="scientific">Giardia intestinalis</name>
    <name type="common">Giardia lamblia</name>
    <dbReference type="NCBI Taxonomy" id="5741"/>
    <lineage>
        <taxon>Eukaryota</taxon>
        <taxon>Metamonada</taxon>
        <taxon>Diplomonadida</taxon>
        <taxon>Hexamitidae</taxon>
        <taxon>Giardiinae</taxon>
        <taxon>Giardia</taxon>
    </lineage>
</organism>
<name>SAR1_GIAIN</name>
<reference key="1">
    <citation type="submission" date="2002-06" db="EMBL/GenBank/DDBJ databases">
        <title>Sar1p, Giardia homolog to GTP-binding protein Sar1p.</title>
        <authorList>
            <person name="Marti M."/>
            <person name="Hehl A.B."/>
        </authorList>
    </citation>
    <scope>NUCLEOTIDE SEQUENCE [GENOMIC DNA]</scope>
    <source>
        <strain>ATCC 50803 / WB-C6</strain>
    </source>
</reference>